<accession>Q5BIM9</accession>
<accession>Q0VCS7</accession>
<organism>
    <name type="scientific">Bos taurus</name>
    <name type="common">Bovine</name>
    <dbReference type="NCBI Taxonomy" id="9913"/>
    <lineage>
        <taxon>Eukaryota</taxon>
        <taxon>Metazoa</taxon>
        <taxon>Chordata</taxon>
        <taxon>Craniata</taxon>
        <taxon>Vertebrata</taxon>
        <taxon>Euteleostomi</taxon>
        <taxon>Mammalia</taxon>
        <taxon>Eutheria</taxon>
        <taxon>Laurasiatheria</taxon>
        <taxon>Artiodactyla</taxon>
        <taxon>Ruminantia</taxon>
        <taxon>Pecora</taxon>
        <taxon>Bovidae</taxon>
        <taxon>Bovinae</taxon>
        <taxon>Bos</taxon>
    </lineage>
</organism>
<sequence>MSFLIDSSIMITSQILFFGFGWLFFMRQLFKDYEVRQYVVQVIFSVTFAFSCTMFELIIFEILGVLNSSSRYFHWKMNLCVILLILVFMVPFYIGYFIVSNIRLLHKQRLLFSCLLWLTFMYFFWKLGDPFPILSPKHGILSIEQLISRVGVIGVTLMALLSGFGAVNCPYTYMSYFLRNVTDTDILALERRLLQTMDMIISKKKRMAMTRRTMFQKGEVHNKPSGFWGMIKSVTTSAPGSENLTLIQQEVDALEELSRQLFLETADLYATKERIEYSKTFKGKYFNFLGYFFSIYCVWKIFMATINIVFDRVGKTDPVTRGIEITVNYLGIQFDVKFWSQHISFILVGIIIVTSIRGLLITLTKFFYAISSSKSSNVIVLLLAQIMGMYFVSSVLLIRMSMPLEYRTIITEVLGELQFNFYHRWFDVIFLVSALSSILFLYLAHKQAPEKHMAP</sequence>
<reference key="1">
    <citation type="journal article" date="2005" name="BMC Genomics">
        <title>Characterization of 954 bovine full-CDS cDNA sequences.</title>
        <authorList>
            <person name="Harhay G.P."/>
            <person name="Sonstegard T.S."/>
            <person name="Keele J.W."/>
            <person name="Heaton M.P."/>
            <person name="Clawson M.L."/>
            <person name="Snelling W.M."/>
            <person name="Wiedmann R.T."/>
            <person name="Van Tassell C.P."/>
            <person name="Smith T.P.L."/>
        </authorList>
    </citation>
    <scope>NUCLEOTIDE SEQUENCE [LARGE SCALE MRNA] (ISOFORM 2)</scope>
</reference>
<reference key="2">
    <citation type="submission" date="2006-08" db="EMBL/GenBank/DDBJ databases">
        <authorList>
            <consortium name="NIH - Mammalian Gene Collection (MGC) project"/>
        </authorList>
    </citation>
    <scope>NUCLEOTIDE SEQUENCE [LARGE SCALE MRNA] (ISOFORM 2)</scope>
    <source>
        <strain>Hereford</strain>
        <tissue>Fetal lung</tissue>
    </source>
</reference>
<evidence type="ECO:0000250" key="1">
    <source>
        <dbReference type="UniProtKB" id="B7ZAQ6"/>
    </source>
</evidence>
<evidence type="ECO:0000250" key="2">
    <source>
        <dbReference type="UniProtKB" id="Q8BS95"/>
    </source>
</evidence>
<evidence type="ECO:0000255" key="3"/>
<evidence type="ECO:0000303" key="4">
    <source>
    </source>
</evidence>
<evidence type="ECO:0000303" key="5">
    <source ref="2"/>
</evidence>
<evidence type="ECO:0000305" key="6"/>
<comment type="function">
    <text evidence="1 2">Voltage-gated channel that enables the transfer of monoatomic anions such as iodide, chloride, bromide and fluoride which may function in counter-ion conductance and participates in Golgi acidification (By similarity). Plays a role in lymphocyte development, probably by acting as a RABL3 effector in hematopoietic cells (By similarity).</text>
</comment>
<comment type="catalytic activity">
    <reaction evidence="1">
        <text>iodide(out) = iodide(in)</text>
        <dbReference type="Rhea" id="RHEA:66324"/>
        <dbReference type="ChEBI" id="CHEBI:16382"/>
    </reaction>
</comment>
<comment type="catalytic activity">
    <reaction evidence="1">
        <text>chloride(in) = chloride(out)</text>
        <dbReference type="Rhea" id="RHEA:29823"/>
        <dbReference type="ChEBI" id="CHEBI:17996"/>
    </reaction>
</comment>
<comment type="catalytic activity">
    <reaction evidence="1">
        <text>bromide(in) = bromide(out)</text>
        <dbReference type="Rhea" id="RHEA:75383"/>
        <dbReference type="ChEBI" id="CHEBI:15858"/>
    </reaction>
</comment>
<comment type="catalytic activity">
    <reaction evidence="1">
        <text>fluoride(in) = fluoride(out)</text>
        <dbReference type="Rhea" id="RHEA:76159"/>
        <dbReference type="ChEBI" id="CHEBI:17051"/>
    </reaction>
</comment>
<comment type="subunit">
    <text evidence="1 2">Homotrimer (By similarity). Interacts with RABL3; the interaction stabilizes GPR89A (By similarity).</text>
</comment>
<comment type="subcellular location">
    <subcellularLocation>
        <location evidence="1">Golgi apparatus membrane</location>
        <topology evidence="3">Multi-pass membrane protein</topology>
    </subcellularLocation>
</comment>
<comment type="alternative products">
    <event type="alternative splicing"/>
    <isoform>
        <id>Q5BIM9-1</id>
        <name>1</name>
        <sequence type="displayed"/>
    </isoform>
    <isoform>
        <id>Q5BIM9-2</id>
        <name>2</name>
        <sequence type="described" ref="VSP_039345"/>
    </isoform>
</comment>
<comment type="similarity">
    <text evidence="6">Belongs to the Golgi pH regulator (TC 1.A.38) family.</text>
</comment>
<name>GPHR_BOVIN</name>
<feature type="chain" id="PRO_0000223259" description="Golgi pH regulator">
    <location>
        <begin position="1"/>
        <end position="455"/>
    </location>
</feature>
<feature type="transmembrane region" description="Helical" evidence="3">
    <location>
        <begin position="5"/>
        <end position="25"/>
    </location>
</feature>
<feature type="transmembrane region" description="Helical" evidence="3">
    <location>
        <begin position="46"/>
        <end position="66"/>
    </location>
</feature>
<feature type="transmembrane region" description="Helical" evidence="3">
    <location>
        <begin position="79"/>
        <end position="99"/>
    </location>
</feature>
<feature type="transmembrane region" description="Helical" evidence="3">
    <location>
        <begin position="114"/>
        <end position="134"/>
    </location>
</feature>
<feature type="transmembrane region" description="Helical" evidence="3">
    <location>
        <begin position="150"/>
        <end position="170"/>
    </location>
</feature>
<feature type="transmembrane region" description="Helical" evidence="3">
    <location>
        <begin position="290"/>
        <end position="310"/>
    </location>
</feature>
<feature type="transmembrane region" description="Helical" evidence="3">
    <location>
        <begin position="343"/>
        <end position="363"/>
    </location>
</feature>
<feature type="transmembrane region" description="Helical" evidence="3">
    <location>
        <begin position="378"/>
        <end position="398"/>
    </location>
</feature>
<feature type="transmembrane region" description="Helical" evidence="3">
    <location>
        <begin position="425"/>
        <end position="445"/>
    </location>
</feature>
<feature type="glycosylation site" description="N-linked (GlcNAc...) asparagine" evidence="3">
    <location>
        <position position="180"/>
    </location>
</feature>
<feature type="glycosylation site" description="N-linked (GlcNAc...) asparagine" evidence="3">
    <location>
        <position position="243"/>
    </location>
</feature>
<feature type="splice variant" id="VSP_039345" description="In isoform 2." evidence="4 5">
    <location>
        <begin position="304"/>
        <end position="335"/>
    </location>
</feature>
<protein>
    <recommendedName>
        <fullName evidence="1">Golgi pH regulator</fullName>
    </recommendedName>
    <alternativeName>
        <fullName>Protein GPR89</fullName>
    </alternativeName>
</protein>
<gene>
    <name evidence="1" type="primary">GPR89</name>
    <name type="synonym">GPHR</name>
    <name type="synonym">GPR89A</name>
</gene>
<proteinExistence type="evidence at transcript level"/>
<dbReference type="EMBL" id="BT021195">
    <property type="protein sequence ID" value="AAX31377.1"/>
    <property type="molecule type" value="mRNA"/>
</dbReference>
<dbReference type="EMBL" id="BT021606">
    <property type="protein sequence ID" value="AAX46453.1"/>
    <property type="molecule type" value="mRNA"/>
</dbReference>
<dbReference type="EMBL" id="BC120025">
    <property type="protein sequence ID" value="AAI20026.1"/>
    <property type="molecule type" value="mRNA"/>
</dbReference>
<dbReference type="RefSeq" id="NP_001070438.1">
    <molecule id="Q5BIM9-2"/>
    <property type="nucleotide sequence ID" value="NM_001076970.1"/>
</dbReference>
<dbReference type="SMR" id="Q5BIM9"/>
<dbReference type="FunCoup" id="Q5BIM9">
    <property type="interactions" value="2324"/>
</dbReference>
<dbReference type="STRING" id="9913.ENSBTAP00000043069"/>
<dbReference type="GlyCosmos" id="Q5BIM9">
    <property type="glycosylation" value="2 sites, No reported glycans"/>
</dbReference>
<dbReference type="GlyGen" id="Q5BIM9">
    <property type="glycosylation" value="2 sites"/>
</dbReference>
<dbReference type="PaxDb" id="9913-ENSBTAP00000043069"/>
<dbReference type="Ensembl" id="ENSBTAT00000007637.6">
    <molecule id="Q5BIM9-2"/>
    <property type="protein sequence ID" value="ENSBTAP00000007637.6"/>
    <property type="gene ID" value="ENSBTAG00000005809.7"/>
</dbReference>
<dbReference type="GeneID" id="767859"/>
<dbReference type="KEGG" id="bta:767859"/>
<dbReference type="CTD" id="653519"/>
<dbReference type="VEuPathDB" id="HostDB:ENSBTAG00000005809"/>
<dbReference type="eggNOG" id="KOG2417">
    <property type="taxonomic scope" value="Eukaryota"/>
</dbReference>
<dbReference type="GeneTree" id="ENSGT00390000000684"/>
<dbReference type="InParanoid" id="Q5BIM9"/>
<dbReference type="OrthoDB" id="264392at2759"/>
<dbReference type="Proteomes" id="UP000009136">
    <property type="component" value="Chromosome 3"/>
</dbReference>
<dbReference type="Bgee" id="ENSBTAG00000005809">
    <property type="expression patterns" value="Expressed in caput epididymis and 106 other cell types or tissues"/>
</dbReference>
<dbReference type="GO" id="GO:0032580">
    <property type="term" value="C:Golgi cisterna membrane"/>
    <property type="evidence" value="ECO:0000250"/>
    <property type="project" value="UniProtKB"/>
</dbReference>
<dbReference type="GO" id="GO:0000139">
    <property type="term" value="C:Golgi membrane"/>
    <property type="evidence" value="ECO:0007669"/>
    <property type="project" value="UniProtKB-SubCell"/>
</dbReference>
<dbReference type="GO" id="GO:0030660">
    <property type="term" value="C:Golgi-associated vesicle membrane"/>
    <property type="evidence" value="ECO:0000250"/>
    <property type="project" value="UniProtKB"/>
</dbReference>
<dbReference type="GO" id="GO:0034702">
    <property type="term" value="C:monoatomic ion channel complex"/>
    <property type="evidence" value="ECO:0007669"/>
    <property type="project" value="UniProtKB-KW"/>
</dbReference>
<dbReference type="GO" id="GO:0008308">
    <property type="term" value="F:voltage-gated monoatomic anion channel activity"/>
    <property type="evidence" value="ECO:0000250"/>
    <property type="project" value="UniProtKB"/>
</dbReference>
<dbReference type="GO" id="GO:0051452">
    <property type="term" value="P:intracellular pH reduction"/>
    <property type="evidence" value="ECO:0000250"/>
    <property type="project" value="UniProtKB"/>
</dbReference>
<dbReference type="GO" id="GO:0015031">
    <property type="term" value="P:protein transport"/>
    <property type="evidence" value="ECO:0007669"/>
    <property type="project" value="UniProtKB-KW"/>
</dbReference>
<dbReference type="GO" id="GO:0030217">
    <property type="term" value="P:T cell differentiation"/>
    <property type="evidence" value="ECO:0000250"/>
    <property type="project" value="UniProtKB"/>
</dbReference>
<dbReference type="InterPro" id="IPR025969">
    <property type="entry name" value="ABA_GPCR_dom"/>
</dbReference>
<dbReference type="InterPro" id="IPR022535">
    <property type="entry name" value="Golgi_pH-regulator_cons_dom"/>
</dbReference>
<dbReference type="InterPro" id="IPR015672">
    <property type="entry name" value="GPHR/GTG"/>
</dbReference>
<dbReference type="PANTHER" id="PTHR15948">
    <property type="entry name" value="G-PROTEIN COUPLED RECEPTOR 89-RELATED"/>
    <property type="match status" value="1"/>
</dbReference>
<dbReference type="PANTHER" id="PTHR15948:SF0">
    <property type="entry name" value="GOLGI PH REGULATOR A-RELATED"/>
    <property type="match status" value="1"/>
</dbReference>
<dbReference type="Pfam" id="PF12430">
    <property type="entry name" value="ABA_GPCR"/>
    <property type="match status" value="1"/>
</dbReference>
<dbReference type="Pfam" id="PF12537">
    <property type="entry name" value="GPHR_N"/>
    <property type="match status" value="1"/>
</dbReference>
<keyword id="KW-0025">Alternative splicing</keyword>
<keyword id="KW-0325">Glycoprotein</keyword>
<keyword id="KW-0333">Golgi apparatus</keyword>
<keyword id="KW-0407">Ion channel</keyword>
<keyword id="KW-0406">Ion transport</keyword>
<keyword id="KW-0472">Membrane</keyword>
<keyword id="KW-0653">Protein transport</keyword>
<keyword id="KW-1185">Reference proteome</keyword>
<keyword id="KW-0812">Transmembrane</keyword>
<keyword id="KW-1133">Transmembrane helix</keyword>
<keyword id="KW-0813">Transport</keyword>
<keyword id="KW-0851">Voltage-gated channel</keyword>